<reference key="1">
    <citation type="journal article" date="2008" name="Antimicrob. Agents Chemother.">
        <title>Mutated response regulator graR is responsible for phenotypic conversion of Staphylococcus aureus from heterogeneous vancomycin-intermediate resistance to vancomycin-intermediate resistance.</title>
        <authorList>
            <person name="Neoh H.-M."/>
            <person name="Cui L."/>
            <person name="Yuzawa H."/>
            <person name="Takeuchi F."/>
            <person name="Matsuo M."/>
            <person name="Hiramatsu K."/>
        </authorList>
    </citation>
    <scope>NUCLEOTIDE SEQUENCE [LARGE SCALE GENOMIC DNA]</scope>
    <source>
        <strain>Mu3 / ATCC 700698</strain>
    </source>
</reference>
<evidence type="ECO:0000255" key="1">
    <source>
        <dbReference type="HAMAP-Rule" id="MF_01445"/>
    </source>
</evidence>
<keyword id="KW-0012">Acyltransferase</keyword>
<keyword id="KW-0963">Cytoplasm</keyword>
<keyword id="KW-0408">Iron</keyword>
<keyword id="KW-0479">Metal-binding</keyword>
<keyword id="KW-0808">Transferase</keyword>
<keyword id="KW-0819">tRNA processing</keyword>
<comment type="function">
    <text evidence="1">Required for the formation of a threonylcarbamoyl group on adenosine at position 37 (t(6)A37) in tRNAs that read codons beginning with adenine. Is involved in the transfer of the threonylcarbamoyl moiety of threonylcarbamoyl-AMP (TC-AMP) to the N6 group of A37, together with TsaE and TsaB. TsaD likely plays a direct catalytic role in this reaction.</text>
</comment>
<comment type="catalytic activity">
    <reaction evidence="1">
        <text>L-threonylcarbamoyladenylate + adenosine(37) in tRNA = N(6)-L-threonylcarbamoyladenosine(37) in tRNA + AMP + H(+)</text>
        <dbReference type="Rhea" id="RHEA:37059"/>
        <dbReference type="Rhea" id="RHEA-COMP:10162"/>
        <dbReference type="Rhea" id="RHEA-COMP:10163"/>
        <dbReference type="ChEBI" id="CHEBI:15378"/>
        <dbReference type="ChEBI" id="CHEBI:73682"/>
        <dbReference type="ChEBI" id="CHEBI:74411"/>
        <dbReference type="ChEBI" id="CHEBI:74418"/>
        <dbReference type="ChEBI" id="CHEBI:456215"/>
        <dbReference type="EC" id="2.3.1.234"/>
    </reaction>
</comment>
<comment type="cofactor">
    <cofactor evidence="1">
        <name>Fe(2+)</name>
        <dbReference type="ChEBI" id="CHEBI:29033"/>
    </cofactor>
    <text evidence="1">Binds 1 Fe(2+) ion per subunit.</text>
</comment>
<comment type="subcellular location">
    <subcellularLocation>
        <location evidence="1">Cytoplasm</location>
    </subcellularLocation>
</comment>
<comment type="similarity">
    <text evidence="1">Belongs to the KAE1 / TsaD family.</text>
</comment>
<sequence length="341" mass="36863">MTKDILILAVETSCDETSVSVIKNGRDILSNTVLSQIESHKRFGGVVPEVASRHHVEGITTTINEALVDADVSMEDIDAIAVTEGPGLIGALLIGVNAAKALAFAYDKPLIPVHHIAGHIYANHIEEPLTFPLIALIVSGGHTELVYMKDHLSFEVIGETRDDAVGEAYDKVARTIGLNYPGGPQVDRLAAEGEDTYSFPRVWLDKDSYDFSFSGLKSAVINQLHNQRQKNIPIIEANVATSFQNSVVEVLTFKAIQACKEYSVQRLIVAGGVASNKGLRQSLADQCKVNDIQLTIPSPKLCTDNAAMIGVAGHSLYQQGRFADLALNGHSNIDLEEYSAE</sequence>
<proteinExistence type="inferred from homology"/>
<feature type="chain" id="PRO_1000024459" description="tRNA N6-adenosine threonylcarbamoyltransferase">
    <location>
        <begin position="1"/>
        <end position="341"/>
    </location>
</feature>
<feature type="binding site" evidence="1">
    <location>
        <position position="115"/>
    </location>
    <ligand>
        <name>Fe cation</name>
        <dbReference type="ChEBI" id="CHEBI:24875"/>
    </ligand>
</feature>
<feature type="binding site" evidence="1">
    <location>
        <position position="119"/>
    </location>
    <ligand>
        <name>Fe cation</name>
        <dbReference type="ChEBI" id="CHEBI:24875"/>
    </ligand>
</feature>
<feature type="binding site" evidence="1">
    <location>
        <begin position="137"/>
        <end position="141"/>
    </location>
    <ligand>
        <name>substrate</name>
    </ligand>
</feature>
<feature type="binding site" evidence="1">
    <location>
        <position position="170"/>
    </location>
    <ligand>
        <name>substrate</name>
    </ligand>
</feature>
<feature type="binding site" evidence="1">
    <location>
        <position position="183"/>
    </location>
    <ligand>
        <name>substrate</name>
    </ligand>
</feature>
<feature type="binding site" evidence="1">
    <location>
        <position position="187"/>
    </location>
    <ligand>
        <name>substrate</name>
    </ligand>
</feature>
<feature type="binding site" evidence="1">
    <location>
        <position position="276"/>
    </location>
    <ligand>
        <name>substrate</name>
    </ligand>
</feature>
<feature type="binding site" evidence="1">
    <location>
        <position position="304"/>
    </location>
    <ligand>
        <name>Fe cation</name>
        <dbReference type="ChEBI" id="CHEBI:24875"/>
    </ligand>
</feature>
<accession>A7X4L9</accession>
<gene>
    <name evidence="1" type="primary">tsaD</name>
    <name type="synonym">gcp</name>
    <name type="ordered locus">SAHV_2034</name>
</gene>
<organism>
    <name type="scientific">Staphylococcus aureus (strain Mu3 / ATCC 700698)</name>
    <dbReference type="NCBI Taxonomy" id="418127"/>
    <lineage>
        <taxon>Bacteria</taxon>
        <taxon>Bacillati</taxon>
        <taxon>Bacillota</taxon>
        <taxon>Bacilli</taxon>
        <taxon>Bacillales</taxon>
        <taxon>Staphylococcaceae</taxon>
        <taxon>Staphylococcus</taxon>
    </lineage>
</organism>
<dbReference type="EC" id="2.3.1.234" evidence="1"/>
<dbReference type="EMBL" id="AP009324">
    <property type="protein sequence ID" value="BAF78917.1"/>
    <property type="molecule type" value="Genomic_DNA"/>
</dbReference>
<dbReference type="RefSeq" id="WP_000159041.1">
    <property type="nucleotide sequence ID" value="NC_009782.1"/>
</dbReference>
<dbReference type="SMR" id="A7X4L9"/>
<dbReference type="KEGG" id="saw:SAHV_2034"/>
<dbReference type="HOGENOM" id="CLU_023208_0_2_9"/>
<dbReference type="GO" id="GO:0005737">
    <property type="term" value="C:cytoplasm"/>
    <property type="evidence" value="ECO:0007669"/>
    <property type="project" value="UniProtKB-SubCell"/>
</dbReference>
<dbReference type="GO" id="GO:0005506">
    <property type="term" value="F:iron ion binding"/>
    <property type="evidence" value="ECO:0007669"/>
    <property type="project" value="UniProtKB-UniRule"/>
</dbReference>
<dbReference type="GO" id="GO:0061711">
    <property type="term" value="F:N(6)-L-threonylcarbamoyladenine synthase activity"/>
    <property type="evidence" value="ECO:0007669"/>
    <property type="project" value="UniProtKB-EC"/>
</dbReference>
<dbReference type="GO" id="GO:0002949">
    <property type="term" value="P:tRNA threonylcarbamoyladenosine modification"/>
    <property type="evidence" value="ECO:0007669"/>
    <property type="project" value="UniProtKB-UniRule"/>
</dbReference>
<dbReference type="CDD" id="cd24133">
    <property type="entry name" value="ASKHA_NBD_TsaD_bac"/>
    <property type="match status" value="1"/>
</dbReference>
<dbReference type="FunFam" id="3.30.420.40:FF:000012">
    <property type="entry name" value="tRNA N6-adenosine threonylcarbamoyltransferase"/>
    <property type="match status" value="1"/>
</dbReference>
<dbReference type="FunFam" id="3.30.420.40:FF:000040">
    <property type="entry name" value="tRNA N6-adenosine threonylcarbamoyltransferase"/>
    <property type="match status" value="1"/>
</dbReference>
<dbReference type="Gene3D" id="3.30.420.40">
    <property type="match status" value="2"/>
</dbReference>
<dbReference type="HAMAP" id="MF_01445">
    <property type="entry name" value="TsaD"/>
    <property type="match status" value="1"/>
</dbReference>
<dbReference type="InterPro" id="IPR043129">
    <property type="entry name" value="ATPase_NBD"/>
</dbReference>
<dbReference type="InterPro" id="IPR000905">
    <property type="entry name" value="Gcp-like_dom"/>
</dbReference>
<dbReference type="InterPro" id="IPR017861">
    <property type="entry name" value="KAE1/TsaD"/>
</dbReference>
<dbReference type="InterPro" id="IPR017860">
    <property type="entry name" value="Peptidase_M22_CS"/>
</dbReference>
<dbReference type="InterPro" id="IPR022450">
    <property type="entry name" value="TsaD"/>
</dbReference>
<dbReference type="NCBIfam" id="TIGR00329">
    <property type="entry name" value="gcp_kae1"/>
    <property type="match status" value="1"/>
</dbReference>
<dbReference type="NCBIfam" id="TIGR03723">
    <property type="entry name" value="T6A_TsaD_YgjD"/>
    <property type="match status" value="1"/>
</dbReference>
<dbReference type="PANTHER" id="PTHR11735">
    <property type="entry name" value="TRNA N6-ADENOSINE THREONYLCARBAMOYLTRANSFERASE"/>
    <property type="match status" value="1"/>
</dbReference>
<dbReference type="PANTHER" id="PTHR11735:SF6">
    <property type="entry name" value="TRNA N6-ADENOSINE THREONYLCARBAMOYLTRANSFERASE, MITOCHONDRIAL"/>
    <property type="match status" value="1"/>
</dbReference>
<dbReference type="Pfam" id="PF00814">
    <property type="entry name" value="TsaD"/>
    <property type="match status" value="1"/>
</dbReference>
<dbReference type="PRINTS" id="PR00789">
    <property type="entry name" value="OSIALOPTASE"/>
</dbReference>
<dbReference type="SUPFAM" id="SSF53067">
    <property type="entry name" value="Actin-like ATPase domain"/>
    <property type="match status" value="2"/>
</dbReference>
<dbReference type="PROSITE" id="PS01016">
    <property type="entry name" value="GLYCOPROTEASE"/>
    <property type="match status" value="1"/>
</dbReference>
<protein>
    <recommendedName>
        <fullName evidence="1">tRNA N6-adenosine threonylcarbamoyltransferase</fullName>
        <ecNumber evidence="1">2.3.1.234</ecNumber>
    </recommendedName>
    <alternativeName>
        <fullName evidence="1">N6-L-threonylcarbamoyladenine synthase</fullName>
        <shortName evidence="1">t(6)A synthase</shortName>
    </alternativeName>
    <alternativeName>
        <fullName evidence="1">t(6)A37 threonylcarbamoyladenosine biosynthesis protein TsaD</fullName>
    </alternativeName>
    <alternativeName>
        <fullName evidence="1">tRNA threonylcarbamoyladenosine biosynthesis protein TsaD</fullName>
    </alternativeName>
</protein>
<name>TSAD_STAA1</name>